<accession>Q9TKZ3</accession>
<gene>
    <name evidence="1" type="primary">ycf4</name>
</gene>
<organism>
    <name type="scientific">Nephroselmis olivacea</name>
    <name type="common">Green alga</name>
    <dbReference type="NCBI Taxonomy" id="31312"/>
    <lineage>
        <taxon>Eukaryota</taxon>
        <taxon>Viridiplantae</taxon>
        <taxon>Chlorophyta</taxon>
        <taxon>Nephroselmidophyceae</taxon>
        <taxon>Nephroselmidales</taxon>
        <taxon>Nephroselmidaceae</taxon>
        <taxon>Nephroselmis</taxon>
    </lineage>
</organism>
<protein>
    <recommendedName>
        <fullName evidence="1">Photosystem I assembly protein Ycf4</fullName>
        <shortName>RF4</shortName>
    </recommendedName>
</protein>
<proteinExistence type="inferred from homology"/>
<sequence length="183" mass="20637">MDTTNLVRRDIVIGSRRVSNYWWASVLLLGGSSFLVVGLSSRLGFDLVPFLPAGDIIFIPQGLVMCFYGLVGLVVSTYLWLTILWSVGGGYNEFNKQEGVMRIFRWGFPGRDRRIQLTCPLQDIEAIRVELQEGMNPRRTIYVRLKGKREVPLTRIGQPLTLAEIEKQAAELAGFLQVSLEGF</sequence>
<geneLocation type="chloroplast"/>
<comment type="function">
    <text evidence="1">Seems to be required for the assembly of the photosystem I complex.</text>
</comment>
<comment type="subcellular location">
    <subcellularLocation>
        <location evidence="1">Plastid</location>
        <location evidence="1">Chloroplast thylakoid membrane</location>
        <topology evidence="1">Multi-pass membrane protein</topology>
    </subcellularLocation>
</comment>
<comment type="similarity">
    <text evidence="1">Belongs to the Ycf4 family.</text>
</comment>
<reference key="1">
    <citation type="journal article" date="1999" name="Proc. Natl. Acad. Sci. U.S.A.">
        <title>The complete chloroplast DNA sequence of the green alga Nephroselmis olivacea: insights into the architecture of ancestral chloroplast genomes.</title>
        <authorList>
            <person name="Turmel M."/>
            <person name="Otis C."/>
            <person name="Lemieux C."/>
        </authorList>
    </citation>
    <scope>NUCLEOTIDE SEQUENCE [LARGE SCALE GENOMIC DNA]</scope>
    <source>
        <strain>NIES-484 / S-N-5-8</strain>
    </source>
</reference>
<dbReference type="EMBL" id="AF137379">
    <property type="protein sequence ID" value="AAD54823.1"/>
    <property type="molecule type" value="Genomic_DNA"/>
</dbReference>
<dbReference type="RefSeq" id="NP_050852.1">
    <property type="nucleotide sequence ID" value="NC_000927.1"/>
</dbReference>
<dbReference type="SMR" id="Q9TKZ3"/>
<dbReference type="GeneID" id="802016"/>
<dbReference type="GO" id="GO:0009535">
    <property type="term" value="C:chloroplast thylakoid membrane"/>
    <property type="evidence" value="ECO:0007669"/>
    <property type="project" value="UniProtKB-SubCell"/>
</dbReference>
<dbReference type="GO" id="GO:0009522">
    <property type="term" value="C:photosystem I"/>
    <property type="evidence" value="ECO:0007669"/>
    <property type="project" value="InterPro"/>
</dbReference>
<dbReference type="GO" id="GO:0015979">
    <property type="term" value="P:photosynthesis"/>
    <property type="evidence" value="ECO:0007669"/>
    <property type="project" value="UniProtKB-UniRule"/>
</dbReference>
<dbReference type="HAMAP" id="MF_00437">
    <property type="entry name" value="Ycf4"/>
    <property type="match status" value="1"/>
</dbReference>
<dbReference type="InterPro" id="IPR003359">
    <property type="entry name" value="PSI_Ycf4_assembly"/>
</dbReference>
<dbReference type="NCBIfam" id="NF002712">
    <property type="entry name" value="PRK02542.1"/>
    <property type="match status" value="1"/>
</dbReference>
<dbReference type="PANTHER" id="PTHR33288">
    <property type="match status" value="1"/>
</dbReference>
<dbReference type="PANTHER" id="PTHR33288:SF4">
    <property type="entry name" value="PHOTOSYSTEM I ASSEMBLY PROTEIN YCF4"/>
    <property type="match status" value="1"/>
</dbReference>
<dbReference type="Pfam" id="PF02392">
    <property type="entry name" value="Ycf4"/>
    <property type="match status" value="1"/>
</dbReference>
<evidence type="ECO:0000255" key="1">
    <source>
        <dbReference type="HAMAP-Rule" id="MF_00437"/>
    </source>
</evidence>
<feature type="chain" id="PRO_0000217614" description="Photosystem I assembly protein Ycf4">
    <location>
        <begin position="1"/>
        <end position="183"/>
    </location>
</feature>
<feature type="transmembrane region" description="Helical" evidence="1">
    <location>
        <begin position="21"/>
        <end position="43"/>
    </location>
</feature>
<feature type="transmembrane region" description="Helical" evidence="1">
    <location>
        <begin position="58"/>
        <end position="80"/>
    </location>
</feature>
<keyword id="KW-0150">Chloroplast</keyword>
<keyword id="KW-0472">Membrane</keyword>
<keyword id="KW-0602">Photosynthesis</keyword>
<keyword id="KW-0934">Plastid</keyword>
<keyword id="KW-0793">Thylakoid</keyword>
<keyword id="KW-0812">Transmembrane</keyword>
<keyword id="KW-1133">Transmembrane helix</keyword>
<name>YCF4_NEPOL</name>